<evidence type="ECO:0000255" key="1">
    <source>
        <dbReference type="HAMAP-Rule" id="MF_00636"/>
    </source>
</evidence>
<evidence type="ECO:0000256" key="2">
    <source>
        <dbReference type="SAM" id="MobiDB-lite"/>
    </source>
</evidence>
<sequence length="320" mass="35531">MPLRKKGAATTKAAATRKDSAKAPASSKRKDAPQHKPELVIITGLSGSGKGSVLKALEDLGFYSVDNLPVELIPKFAELTCNNPSIPAAALVVDIREGSGLKSFPKVFAKIRKSVTARLIFLEADNDAIVRRFSETRRPHPLGTGKSITRSIQSERTQLAPIRAMADLTINTSKFTVHELRDFIGERFRGRRDQSDIMIYVASFGYRNGVPPDSDLVFDVRFLPNPNYIPRFKNLTGRNPDVAGYIRSFPQTVEFINRISDLLVYLLPHYIREGKSYLTISFGCTGGQHRSVMIADEIKRNLSSAGYTAKVNHRDIVKAR</sequence>
<proteinExistence type="inferred from homology"/>
<feature type="chain" id="PRO_0000383287" description="Nucleotide-binding protein Acid_7395">
    <location>
        <begin position="1"/>
        <end position="320"/>
    </location>
</feature>
<feature type="region of interest" description="Disordered" evidence="2">
    <location>
        <begin position="1"/>
        <end position="34"/>
    </location>
</feature>
<feature type="binding site" evidence="1">
    <location>
        <begin position="44"/>
        <end position="51"/>
    </location>
    <ligand>
        <name>ATP</name>
        <dbReference type="ChEBI" id="CHEBI:30616"/>
    </ligand>
</feature>
<feature type="binding site" evidence="1">
    <location>
        <begin position="94"/>
        <end position="97"/>
    </location>
    <ligand>
        <name>GTP</name>
        <dbReference type="ChEBI" id="CHEBI:37565"/>
    </ligand>
</feature>
<comment type="function">
    <text evidence="1">Displays ATPase and GTPase activities.</text>
</comment>
<comment type="similarity">
    <text evidence="1">Belongs to the RapZ-like family.</text>
</comment>
<organism>
    <name type="scientific">Solibacter usitatus (strain Ellin6076)</name>
    <dbReference type="NCBI Taxonomy" id="234267"/>
    <lineage>
        <taxon>Bacteria</taxon>
        <taxon>Pseudomonadati</taxon>
        <taxon>Acidobacteriota</taxon>
        <taxon>Terriglobia</taxon>
        <taxon>Bryobacterales</taxon>
        <taxon>Solibacteraceae</taxon>
        <taxon>Candidatus Solibacter</taxon>
    </lineage>
</organism>
<reference key="1">
    <citation type="journal article" date="2009" name="Appl. Environ. Microbiol.">
        <title>Three genomes from the phylum Acidobacteria provide insight into the lifestyles of these microorganisms in soils.</title>
        <authorList>
            <person name="Ward N.L."/>
            <person name="Challacombe J.F."/>
            <person name="Janssen P.H."/>
            <person name="Henrissat B."/>
            <person name="Coutinho P.M."/>
            <person name="Wu M."/>
            <person name="Xie G."/>
            <person name="Haft D.H."/>
            <person name="Sait M."/>
            <person name="Badger J."/>
            <person name="Barabote R.D."/>
            <person name="Bradley B."/>
            <person name="Brettin T.S."/>
            <person name="Brinkac L.M."/>
            <person name="Bruce D."/>
            <person name="Creasy T."/>
            <person name="Daugherty S.C."/>
            <person name="Davidsen T.M."/>
            <person name="DeBoy R.T."/>
            <person name="Detter J.C."/>
            <person name="Dodson R.J."/>
            <person name="Durkin A.S."/>
            <person name="Ganapathy A."/>
            <person name="Gwinn-Giglio M."/>
            <person name="Han C.S."/>
            <person name="Khouri H."/>
            <person name="Kiss H."/>
            <person name="Kothari S.P."/>
            <person name="Madupu R."/>
            <person name="Nelson K.E."/>
            <person name="Nelson W.C."/>
            <person name="Paulsen I."/>
            <person name="Penn K."/>
            <person name="Ren Q."/>
            <person name="Rosovitz M.J."/>
            <person name="Selengut J.D."/>
            <person name="Shrivastava S."/>
            <person name="Sullivan S.A."/>
            <person name="Tapia R."/>
            <person name="Thompson L.S."/>
            <person name="Watkins K.L."/>
            <person name="Yang Q."/>
            <person name="Yu C."/>
            <person name="Zafar N."/>
            <person name="Zhou L."/>
            <person name="Kuske C.R."/>
        </authorList>
    </citation>
    <scope>NUCLEOTIDE SEQUENCE [LARGE SCALE GENOMIC DNA]</scope>
    <source>
        <strain>Ellin6076</strain>
    </source>
</reference>
<keyword id="KW-0067">ATP-binding</keyword>
<keyword id="KW-0342">GTP-binding</keyword>
<keyword id="KW-0547">Nucleotide-binding</keyword>
<accession>Q01PW6</accession>
<protein>
    <recommendedName>
        <fullName evidence="1">Nucleotide-binding protein Acid_7395</fullName>
    </recommendedName>
</protein>
<dbReference type="EMBL" id="CP000473">
    <property type="protein sequence ID" value="ABJ88304.1"/>
    <property type="molecule type" value="Genomic_DNA"/>
</dbReference>
<dbReference type="SMR" id="Q01PW6"/>
<dbReference type="FunCoup" id="Q01PW6">
    <property type="interactions" value="183"/>
</dbReference>
<dbReference type="STRING" id="234267.Acid_7395"/>
<dbReference type="KEGG" id="sus:Acid_7395"/>
<dbReference type="eggNOG" id="COG1660">
    <property type="taxonomic scope" value="Bacteria"/>
</dbReference>
<dbReference type="HOGENOM" id="CLU_059558_0_0_0"/>
<dbReference type="InParanoid" id="Q01PW6"/>
<dbReference type="OrthoDB" id="9784461at2"/>
<dbReference type="GO" id="GO:0005524">
    <property type="term" value="F:ATP binding"/>
    <property type="evidence" value="ECO:0007669"/>
    <property type="project" value="UniProtKB-UniRule"/>
</dbReference>
<dbReference type="GO" id="GO:0005525">
    <property type="term" value="F:GTP binding"/>
    <property type="evidence" value="ECO:0007669"/>
    <property type="project" value="UniProtKB-UniRule"/>
</dbReference>
<dbReference type="HAMAP" id="MF_00636">
    <property type="entry name" value="RapZ_like"/>
    <property type="match status" value="1"/>
</dbReference>
<dbReference type="InterPro" id="IPR027417">
    <property type="entry name" value="P-loop_NTPase"/>
</dbReference>
<dbReference type="InterPro" id="IPR005337">
    <property type="entry name" value="RapZ-like"/>
</dbReference>
<dbReference type="InterPro" id="IPR053930">
    <property type="entry name" value="RapZ-like_N"/>
</dbReference>
<dbReference type="InterPro" id="IPR053931">
    <property type="entry name" value="RapZ_C"/>
</dbReference>
<dbReference type="NCBIfam" id="NF003828">
    <property type="entry name" value="PRK05416.1"/>
    <property type="match status" value="1"/>
</dbReference>
<dbReference type="PANTHER" id="PTHR30448">
    <property type="entry name" value="RNASE ADAPTER PROTEIN RAPZ"/>
    <property type="match status" value="1"/>
</dbReference>
<dbReference type="PANTHER" id="PTHR30448:SF0">
    <property type="entry name" value="RNASE ADAPTER PROTEIN RAPZ"/>
    <property type="match status" value="1"/>
</dbReference>
<dbReference type="Pfam" id="PF22740">
    <property type="entry name" value="PapZ_C"/>
    <property type="match status" value="1"/>
</dbReference>
<dbReference type="Pfam" id="PF03668">
    <property type="entry name" value="RapZ-like_N"/>
    <property type="match status" value="1"/>
</dbReference>
<dbReference type="PIRSF" id="PIRSF005052">
    <property type="entry name" value="P-loopkin"/>
    <property type="match status" value="1"/>
</dbReference>
<dbReference type="SUPFAM" id="SSF52540">
    <property type="entry name" value="P-loop containing nucleoside triphosphate hydrolases"/>
    <property type="match status" value="1"/>
</dbReference>
<name>Y7395_SOLUE</name>
<gene>
    <name type="ordered locus">Acid_7395</name>
</gene>